<accession>P75174</accession>
<organism>
    <name type="scientific">Mycoplasma pneumoniae (strain ATCC 29342 / M129 / Subtype 1)</name>
    <name type="common">Mycoplasmoides pneumoniae</name>
    <dbReference type="NCBI Taxonomy" id="272634"/>
    <lineage>
        <taxon>Bacteria</taxon>
        <taxon>Bacillati</taxon>
        <taxon>Mycoplasmatota</taxon>
        <taxon>Mycoplasmoidales</taxon>
        <taxon>Mycoplasmoidaceae</taxon>
        <taxon>Mycoplasmoides</taxon>
    </lineage>
</organism>
<feature type="chain" id="PRO_0000210605" description="Uncharacterized protein MG423 homolog">
    <location>
        <begin position="1"/>
        <end position="561"/>
    </location>
</feature>
<feature type="transmembrane region" description="Helical" evidence="1">
    <location>
        <begin position="29"/>
        <end position="49"/>
    </location>
</feature>
<feature type="transmembrane region" description="Helical" evidence="1">
    <location>
        <begin position="80"/>
        <end position="100"/>
    </location>
</feature>
<evidence type="ECO:0000255" key="1"/>
<evidence type="ECO:0000305" key="2"/>
<keyword id="KW-1003">Cell membrane</keyword>
<keyword id="KW-0472">Membrane</keyword>
<keyword id="KW-1185">Reference proteome</keyword>
<keyword id="KW-0812">Transmembrane</keyword>
<keyword id="KW-1133">Transmembrane helix</keyword>
<sequence>MAKINFFAFGGQDERGKNCFVLEINNDVFIFNVGSLTPTTAVLGVKKIIPDFSWIQENQARIKGIFIGNPVTENIGSLEFLFHTVGFFPIYTSTIGAVVIKTKIHENKLNIPHDELEIHELKPLETVKIGHHNITPFKVSSSIPSSFGFALHTDDGYIVYVDDFIVLNDKNIAFENQLNQIIPQVANKTLLLITGVGLVGRNTGFTTPKHKSLEQLNRIIASAKGRVFAACYDSNAYSVMTLAQIARMQNRPFVIYSHSFVHLFNAIVRQKLFNNTHLNTISIEEINNSTNAIVVLTAPPDKLYAKLFKIGTNEDERVRYRKTDSFIFMIPRIAGYEELEAQILDDVARNEVSYYNLGREILSINASDEDMKFLVTSLKPKYIIPTSGLYRDFINFTMVMKQAGVEQSQVLIPFNGEVLAINHKQIDNKKRELKLNPKCVDSAGLQEIGASIMFERDQMSEAGVVTIIIYYDSKKSEFLNEITYSFLGVSLDSNNQVKLKTKMEELIRKQINDIKDFTTIKRRLGKDTSKELKVSIKRAVMNLFTKMTAKAPLILSTIISI</sequence>
<proteinExistence type="predicted"/>
<dbReference type="EMBL" id="U00089">
    <property type="protein sequence ID" value="AAB95869.1"/>
    <property type="molecule type" value="Genomic_DNA"/>
</dbReference>
<dbReference type="PIR" id="S73547">
    <property type="entry name" value="S73547"/>
</dbReference>
<dbReference type="RefSeq" id="NP_110310.1">
    <property type="nucleotide sequence ID" value="NC_000912.1"/>
</dbReference>
<dbReference type="RefSeq" id="WP_010874978.1">
    <property type="nucleotide sequence ID" value="NZ_OU342337.1"/>
</dbReference>
<dbReference type="SMR" id="P75174"/>
<dbReference type="STRING" id="272634.MPN_621"/>
<dbReference type="EnsemblBacteria" id="AAB95869">
    <property type="protein sequence ID" value="AAB95869"/>
    <property type="gene ID" value="MPN_621"/>
</dbReference>
<dbReference type="KEGG" id="mpn:MPN_621"/>
<dbReference type="PATRIC" id="fig|272634.6.peg.685"/>
<dbReference type="HOGENOM" id="CLU_008727_3_2_14"/>
<dbReference type="OrthoDB" id="401053at2"/>
<dbReference type="BioCyc" id="MPNE272634:G1GJ3-1001-MONOMER"/>
<dbReference type="Proteomes" id="UP000000808">
    <property type="component" value="Chromosome"/>
</dbReference>
<dbReference type="GO" id="GO:0005886">
    <property type="term" value="C:plasma membrane"/>
    <property type="evidence" value="ECO:0007669"/>
    <property type="project" value="UniProtKB-SubCell"/>
</dbReference>
<dbReference type="GO" id="GO:0046872">
    <property type="term" value="F:metal ion binding"/>
    <property type="evidence" value="ECO:0007669"/>
    <property type="project" value="InterPro"/>
</dbReference>
<dbReference type="GO" id="GO:0003723">
    <property type="term" value="F:RNA binding"/>
    <property type="evidence" value="ECO:0007669"/>
    <property type="project" value="InterPro"/>
</dbReference>
<dbReference type="Gene3D" id="3.10.20.580">
    <property type="match status" value="1"/>
</dbReference>
<dbReference type="Gene3D" id="3.40.50.10710">
    <property type="entry name" value="Metallo-hydrolase/oxidoreductase"/>
    <property type="match status" value="1"/>
</dbReference>
<dbReference type="Gene3D" id="3.60.15.10">
    <property type="entry name" value="Ribonuclease Z/Hydroxyacylglutathione hydrolase-like"/>
    <property type="match status" value="1"/>
</dbReference>
<dbReference type="InterPro" id="IPR036866">
    <property type="entry name" value="RibonucZ/Hydroxyglut_hydro"/>
</dbReference>
<dbReference type="InterPro" id="IPR004613">
    <property type="entry name" value="RNase_J"/>
</dbReference>
<dbReference type="InterPro" id="IPR042173">
    <property type="entry name" value="RNase_J_2"/>
</dbReference>
<dbReference type="InterPro" id="IPR041636">
    <property type="entry name" value="RNase_J_C"/>
</dbReference>
<dbReference type="NCBIfam" id="TIGR00649">
    <property type="entry name" value="MG423"/>
    <property type="match status" value="1"/>
</dbReference>
<dbReference type="PANTHER" id="PTHR43694">
    <property type="entry name" value="RIBONUCLEASE J"/>
    <property type="match status" value="1"/>
</dbReference>
<dbReference type="PANTHER" id="PTHR43694:SF1">
    <property type="entry name" value="RIBONUCLEASE J"/>
    <property type="match status" value="1"/>
</dbReference>
<dbReference type="Pfam" id="PF17770">
    <property type="entry name" value="RNase_J_C"/>
    <property type="match status" value="1"/>
</dbReference>
<dbReference type="SUPFAM" id="SSF56281">
    <property type="entry name" value="Metallo-hydrolase/oxidoreductase"/>
    <property type="match status" value="1"/>
</dbReference>
<gene>
    <name type="ordered locus">MPN_621</name>
    <name type="ORF">C12_orf561</name>
    <name type="ORF">MP221</name>
</gene>
<protein>
    <recommendedName>
        <fullName>Uncharacterized protein MG423 homolog</fullName>
    </recommendedName>
</protein>
<name>Y621_MYCPN</name>
<comment type="subcellular location">
    <subcellularLocation>
        <location evidence="2">Cell membrane</location>
        <topology evidence="2">Multi-pass membrane protein</topology>
    </subcellularLocation>
</comment>
<reference key="1">
    <citation type="journal article" date="1996" name="Nucleic Acids Res.">
        <title>Complete sequence analysis of the genome of the bacterium Mycoplasma pneumoniae.</title>
        <authorList>
            <person name="Himmelreich R."/>
            <person name="Hilbert H."/>
            <person name="Plagens H."/>
            <person name="Pirkl E."/>
            <person name="Li B.-C."/>
            <person name="Herrmann R."/>
        </authorList>
    </citation>
    <scope>NUCLEOTIDE SEQUENCE [LARGE SCALE GENOMIC DNA]</scope>
    <source>
        <strain>ATCC 29342 / M129 / Subtype 1</strain>
    </source>
</reference>